<organism>
    <name type="scientific">Erwinia tasmaniensis (strain DSM 17950 / CFBP 7177 / CIP 109463 / NCPPB 4357 / Et1/99)</name>
    <dbReference type="NCBI Taxonomy" id="465817"/>
    <lineage>
        <taxon>Bacteria</taxon>
        <taxon>Pseudomonadati</taxon>
        <taxon>Pseudomonadota</taxon>
        <taxon>Gammaproteobacteria</taxon>
        <taxon>Enterobacterales</taxon>
        <taxon>Erwiniaceae</taxon>
        <taxon>Erwinia</taxon>
    </lineage>
</organism>
<comment type="function">
    <text evidence="1">DNA-dependent RNA polymerase catalyzes the transcription of DNA into RNA using the four ribonucleoside triphosphates as substrates.</text>
</comment>
<comment type="catalytic activity">
    <reaction evidence="1">
        <text>RNA(n) + a ribonucleoside 5'-triphosphate = RNA(n+1) + diphosphate</text>
        <dbReference type="Rhea" id="RHEA:21248"/>
        <dbReference type="Rhea" id="RHEA-COMP:14527"/>
        <dbReference type="Rhea" id="RHEA-COMP:17342"/>
        <dbReference type="ChEBI" id="CHEBI:33019"/>
        <dbReference type="ChEBI" id="CHEBI:61557"/>
        <dbReference type="ChEBI" id="CHEBI:140395"/>
        <dbReference type="EC" id="2.7.7.6"/>
    </reaction>
</comment>
<comment type="subunit">
    <text evidence="1">The RNAP catalytic core consists of 2 alpha, 1 beta, 1 beta' and 1 omega subunit. When a sigma factor is associated with the core the holoenzyme is formed, which can initiate transcription.</text>
</comment>
<comment type="similarity">
    <text evidence="1">Belongs to the RNA polymerase beta chain family.</text>
</comment>
<evidence type="ECO:0000255" key="1">
    <source>
        <dbReference type="HAMAP-Rule" id="MF_01321"/>
    </source>
</evidence>
<accession>B2VG96</accession>
<protein>
    <recommendedName>
        <fullName evidence="1">DNA-directed RNA polymerase subunit beta</fullName>
        <shortName evidence="1">RNAP subunit beta</shortName>
        <ecNumber evidence="1">2.7.7.6</ecNumber>
    </recommendedName>
    <alternativeName>
        <fullName evidence="1">RNA polymerase subunit beta</fullName>
    </alternativeName>
    <alternativeName>
        <fullName evidence="1">Transcriptase subunit beta</fullName>
    </alternativeName>
</protein>
<name>RPOB_ERWT9</name>
<proteinExistence type="inferred from homology"/>
<gene>
    <name evidence="1" type="primary">rpoB</name>
    <name type="ordered locus">ETA_01550</name>
</gene>
<sequence length="1342" mass="150532">MVYSYTEKKRIRKDFGKRPQVLDIPYLLSIQLDSFQKFIEQDPEGQYGLEAAFRSVFPIQSYSGNSELQYVSYRLGEPVFDVKECQIRGVTFSAPLRVKLRLVIYEREAPEGTVKDIKEQEVYMGEIPLMTDNGTFVINGTERVIVSQLHRSPGVFFDSDKGKTHSSGKVLYNARIIPYRGSWLDFEFDPKDNLFVRIDRRRKLPATIILRALSYTTEQILDLFFEKVIYQIRDNKLQMELVPERLRGETASFDIESNGTVYVEKGRRITARHIRQLEKDAVAHIEVPVEYIAGKVVAKDYIDESTGELLIAANMELSLDLLAKLSQSGHKRIETLFTNDLDHGPYISETVRVDPTSDRLSALVEIYRMMRPGEPPTREAAENLFENLFFSEDRYDLSAVGRMKFNRSLLRDEIEGSGILSKDDIIQVMKKLIGIRNGIGEVDDIDHLGNRRIRSVGEMAENQFRVGLVRVERAVKERLSLGDLDTLMPQDMINAKPISAAVKEFFGSSQLSQFMDQNNPLSEITHKRRISALGPGGLTRERAGFEVRDVHPTHYGRVCPIETPEGPNIGLINSLSVYAQTNEYGFLETPYRRVRDGVVTDEIHYLSAIEEGNYVIAQANTNLDDEGHFVDDLVTCRSKGESSLFSRDQVDYMDVSTQQVVSVGASLIPFLEHDDANRALMGANMQRQAVPTLRADKPLVGTGMERAVAVDSGVTAVAKRGGTVQYVDASRIVIKVNEDEMYPGEAGIDIYNLTKYTRSNQNTCINQMPCVNLGEPIERGDVLADGPSTDLGELALGQNMRVAFMPWNGYNFEDSILVSERVVQEDRFTTIHIQELACVSRDTKLGPEEITADIPNVGEAALSKLDESGIVYIGAEVTGGDILVGKVTPKGETQLTPEEKLLRAIFGEKASDVKDSSLRVPNGVSGTVIDVQVFTRDGVEKDKRALEIEEMQLKQAKKDLSEELQILEAGLFSRINYLLVAGGIEAEKLDKLPRERWLELGLSDEDKQNQLEQLAEQYDELKHEFEKKLDAKRRKITQGDDLAPGVLKIVKVYLAVKRQIQPGDKMAGRHGNKGVISKINPIEDMPYDENGTPVDIVLNPLGVPSRMNIGQILETHLGMAAKGIGEKINAMLKKQEEVSKLREFIQRAYDLGTDVRQKVDLNTFTDDEVLRLAENLKKGMPIATPVFDGAKESEIKELLQLGGLPSSGQITLFDGRTGEQFERQVTVGYMYMLKLNHLVDDKMHARSTGSYSLVTQQPLGGKAQFGGQRFGEMEVWALEAYGAAYTLQEMLTVKSDDVNGRTKMYKNIVDGNHQMEPGMPESFNVLLKEIRSLGINIELEDE</sequence>
<dbReference type="EC" id="2.7.7.6" evidence="1"/>
<dbReference type="EMBL" id="CU468135">
    <property type="protein sequence ID" value="CAO95201.1"/>
    <property type="molecule type" value="Genomic_DNA"/>
</dbReference>
<dbReference type="RefSeq" id="WP_012439924.1">
    <property type="nucleotide sequence ID" value="NC_010694.1"/>
</dbReference>
<dbReference type="SMR" id="B2VG96"/>
<dbReference type="STRING" id="465817.ETA_01550"/>
<dbReference type="KEGG" id="eta:ETA_01550"/>
<dbReference type="eggNOG" id="COG0085">
    <property type="taxonomic scope" value="Bacteria"/>
</dbReference>
<dbReference type="HOGENOM" id="CLU_000524_4_1_6"/>
<dbReference type="OrthoDB" id="9803954at2"/>
<dbReference type="Proteomes" id="UP000001726">
    <property type="component" value="Chromosome"/>
</dbReference>
<dbReference type="GO" id="GO:0000428">
    <property type="term" value="C:DNA-directed RNA polymerase complex"/>
    <property type="evidence" value="ECO:0007669"/>
    <property type="project" value="UniProtKB-KW"/>
</dbReference>
<dbReference type="GO" id="GO:0003677">
    <property type="term" value="F:DNA binding"/>
    <property type="evidence" value="ECO:0007669"/>
    <property type="project" value="UniProtKB-UniRule"/>
</dbReference>
<dbReference type="GO" id="GO:0003899">
    <property type="term" value="F:DNA-directed RNA polymerase activity"/>
    <property type="evidence" value="ECO:0007669"/>
    <property type="project" value="UniProtKB-UniRule"/>
</dbReference>
<dbReference type="GO" id="GO:0032549">
    <property type="term" value="F:ribonucleoside binding"/>
    <property type="evidence" value="ECO:0007669"/>
    <property type="project" value="InterPro"/>
</dbReference>
<dbReference type="GO" id="GO:0006351">
    <property type="term" value="P:DNA-templated transcription"/>
    <property type="evidence" value="ECO:0007669"/>
    <property type="project" value="UniProtKB-UniRule"/>
</dbReference>
<dbReference type="CDD" id="cd00653">
    <property type="entry name" value="RNA_pol_B_RPB2"/>
    <property type="match status" value="1"/>
</dbReference>
<dbReference type="FunFam" id="2.30.150.10:FF:000001">
    <property type="entry name" value="DNA-directed RNA polymerase subunit beta"/>
    <property type="match status" value="1"/>
</dbReference>
<dbReference type="FunFam" id="2.40.270.10:FF:000003">
    <property type="entry name" value="DNA-directed RNA polymerase subunit beta"/>
    <property type="match status" value="1"/>
</dbReference>
<dbReference type="FunFam" id="2.40.270.10:FF:000004">
    <property type="entry name" value="DNA-directed RNA polymerase subunit beta"/>
    <property type="match status" value="1"/>
</dbReference>
<dbReference type="FunFam" id="2.40.50.100:FF:000006">
    <property type="entry name" value="DNA-directed RNA polymerase subunit beta"/>
    <property type="match status" value="1"/>
</dbReference>
<dbReference type="FunFam" id="2.40.50.150:FF:000001">
    <property type="entry name" value="DNA-directed RNA polymerase subunit beta"/>
    <property type="match status" value="1"/>
</dbReference>
<dbReference type="FunFam" id="3.90.1100.10:FF:000002">
    <property type="entry name" value="DNA-directed RNA polymerase subunit beta"/>
    <property type="match status" value="1"/>
</dbReference>
<dbReference type="FunFam" id="3.90.1110.10:FF:000001">
    <property type="entry name" value="DNA-directed RNA polymerase subunit beta"/>
    <property type="match status" value="1"/>
</dbReference>
<dbReference type="FunFam" id="3.90.1110.10:FF:000004">
    <property type="entry name" value="DNA-directed RNA polymerase subunit beta"/>
    <property type="match status" value="1"/>
</dbReference>
<dbReference type="FunFam" id="3.90.1800.10:FF:000001">
    <property type="entry name" value="DNA-directed RNA polymerase subunit beta"/>
    <property type="match status" value="1"/>
</dbReference>
<dbReference type="Gene3D" id="2.40.50.100">
    <property type="match status" value="1"/>
</dbReference>
<dbReference type="Gene3D" id="2.40.50.150">
    <property type="match status" value="1"/>
</dbReference>
<dbReference type="Gene3D" id="3.90.1100.10">
    <property type="match status" value="2"/>
</dbReference>
<dbReference type="Gene3D" id="6.10.140.1670">
    <property type="match status" value="1"/>
</dbReference>
<dbReference type="Gene3D" id="2.30.150.10">
    <property type="entry name" value="DNA-directed RNA polymerase, beta subunit, external 1 domain"/>
    <property type="match status" value="1"/>
</dbReference>
<dbReference type="Gene3D" id="2.40.270.10">
    <property type="entry name" value="DNA-directed RNA polymerase, subunit 2, domain 6"/>
    <property type="match status" value="1"/>
</dbReference>
<dbReference type="Gene3D" id="3.90.1800.10">
    <property type="entry name" value="RNA polymerase alpha subunit dimerisation domain"/>
    <property type="match status" value="1"/>
</dbReference>
<dbReference type="Gene3D" id="3.90.1110.10">
    <property type="entry name" value="RNA polymerase Rpb2, domain 2"/>
    <property type="match status" value="1"/>
</dbReference>
<dbReference type="HAMAP" id="MF_01321">
    <property type="entry name" value="RNApol_bact_RpoB"/>
    <property type="match status" value="1"/>
</dbReference>
<dbReference type="InterPro" id="IPR042107">
    <property type="entry name" value="DNA-dir_RNA_pol_bsu_ext_1_sf"/>
</dbReference>
<dbReference type="InterPro" id="IPR019462">
    <property type="entry name" value="DNA-dir_RNA_pol_bsu_external_1"/>
</dbReference>
<dbReference type="InterPro" id="IPR015712">
    <property type="entry name" value="DNA-dir_RNA_pol_su2"/>
</dbReference>
<dbReference type="InterPro" id="IPR007120">
    <property type="entry name" value="DNA-dir_RNAP_su2_dom"/>
</dbReference>
<dbReference type="InterPro" id="IPR037033">
    <property type="entry name" value="DNA-dir_RNAP_su2_hyb_sf"/>
</dbReference>
<dbReference type="InterPro" id="IPR010243">
    <property type="entry name" value="RNA_pol_bsu_bac"/>
</dbReference>
<dbReference type="InterPro" id="IPR007121">
    <property type="entry name" value="RNA_pol_bsu_CS"/>
</dbReference>
<dbReference type="InterPro" id="IPR007644">
    <property type="entry name" value="RNA_pol_bsu_protrusion"/>
</dbReference>
<dbReference type="InterPro" id="IPR007642">
    <property type="entry name" value="RNA_pol_Rpb2_2"/>
</dbReference>
<dbReference type="InterPro" id="IPR037034">
    <property type="entry name" value="RNA_pol_Rpb2_2_sf"/>
</dbReference>
<dbReference type="InterPro" id="IPR007645">
    <property type="entry name" value="RNA_pol_Rpb2_3"/>
</dbReference>
<dbReference type="InterPro" id="IPR007641">
    <property type="entry name" value="RNA_pol_Rpb2_7"/>
</dbReference>
<dbReference type="InterPro" id="IPR014724">
    <property type="entry name" value="RNA_pol_RPB2_OB-fold"/>
</dbReference>
<dbReference type="NCBIfam" id="NF001616">
    <property type="entry name" value="PRK00405.1"/>
    <property type="match status" value="1"/>
</dbReference>
<dbReference type="NCBIfam" id="TIGR02013">
    <property type="entry name" value="rpoB"/>
    <property type="match status" value="1"/>
</dbReference>
<dbReference type="PANTHER" id="PTHR20856">
    <property type="entry name" value="DNA-DIRECTED RNA POLYMERASE I SUBUNIT 2"/>
    <property type="match status" value="1"/>
</dbReference>
<dbReference type="Pfam" id="PF04563">
    <property type="entry name" value="RNA_pol_Rpb2_1"/>
    <property type="match status" value="1"/>
</dbReference>
<dbReference type="Pfam" id="PF04561">
    <property type="entry name" value="RNA_pol_Rpb2_2"/>
    <property type="match status" value="2"/>
</dbReference>
<dbReference type="Pfam" id="PF04565">
    <property type="entry name" value="RNA_pol_Rpb2_3"/>
    <property type="match status" value="1"/>
</dbReference>
<dbReference type="Pfam" id="PF10385">
    <property type="entry name" value="RNA_pol_Rpb2_45"/>
    <property type="match status" value="1"/>
</dbReference>
<dbReference type="Pfam" id="PF00562">
    <property type="entry name" value="RNA_pol_Rpb2_6"/>
    <property type="match status" value="1"/>
</dbReference>
<dbReference type="Pfam" id="PF04560">
    <property type="entry name" value="RNA_pol_Rpb2_7"/>
    <property type="match status" value="1"/>
</dbReference>
<dbReference type="SUPFAM" id="SSF64484">
    <property type="entry name" value="beta and beta-prime subunits of DNA dependent RNA-polymerase"/>
    <property type="match status" value="1"/>
</dbReference>
<dbReference type="PROSITE" id="PS01166">
    <property type="entry name" value="RNA_POL_BETA"/>
    <property type="match status" value="1"/>
</dbReference>
<keyword id="KW-0240">DNA-directed RNA polymerase</keyword>
<keyword id="KW-0548">Nucleotidyltransferase</keyword>
<keyword id="KW-1185">Reference proteome</keyword>
<keyword id="KW-0804">Transcription</keyword>
<keyword id="KW-0808">Transferase</keyword>
<feature type="chain" id="PRO_1000141695" description="DNA-directed RNA polymerase subunit beta">
    <location>
        <begin position="1"/>
        <end position="1342"/>
    </location>
</feature>
<reference key="1">
    <citation type="journal article" date="2008" name="Environ. Microbiol.">
        <title>The genome of Erwinia tasmaniensis strain Et1/99, a non-pathogenic bacterium in the genus Erwinia.</title>
        <authorList>
            <person name="Kube M."/>
            <person name="Migdoll A.M."/>
            <person name="Mueller I."/>
            <person name="Kuhl H."/>
            <person name="Beck A."/>
            <person name="Reinhardt R."/>
            <person name="Geider K."/>
        </authorList>
    </citation>
    <scope>NUCLEOTIDE SEQUENCE [LARGE SCALE GENOMIC DNA]</scope>
    <source>
        <strain>DSM 17950 / CFBP 7177 / CIP 109463 / NCPPB 4357 / Et1/99</strain>
    </source>
</reference>